<keyword id="KW-0998">Cell outer membrane</keyword>
<keyword id="KW-0406">Ion transport</keyword>
<keyword id="KW-0472">Membrane</keyword>
<keyword id="KW-0626">Porin</keyword>
<keyword id="KW-0732">Signal</keyword>
<keyword id="KW-0812">Transmembrane</keyword>
<keyword id="KW-1134">Transmembrane beta strand</keyword>
<keyword id="KW-0813">Transport</keyword>
<gene>
    <name type="primary">omp2a</name>
</gene>
<accession>Q45331</accession>
<accession>Q0GK37</accession>
<evidence type="ECO:0000250" key="1">
    <source>
        <dbReference type="UniProtKB" id="B2SAB9"/>
    </source>
</evidence>
<evidence type="ECO:0000255" key="2"/>
<evidence type="ECO:0000305" key="3"/>
<proteinExistence type="inferred from homology"/>
<comment type="function">
    <text evidence="1">Forms passive diffusion pores that allow small molecular weight hydrophilic materials across the outer membrane.</text>
</comment>
<comment type="subunit">
    <text evidence="1">Monomer.</text>
</comment>
<comment type="subcellular location">
    <subcellularLocation>
        <location evidence="1">Cell outer membrane</location>
        <topology evidence="1">Multi-pass membrane protein</topology>
    </subcellularLocation>
</comment>
<comment type="domain">
    <text evidence="1">Consists of 16-stranded beta-barrel sheets, with large surface-exposed loops, that form a transmembrane pore at the center of each barrel. The pore is partially ocluded by a peptide loop that folds into the pore lumen.</text>
</comment>
<comment type="miscellaneous">
    <text evidence="1">The pore formed by Omp2a is larger than the one formed by Omp2b. Omp2b pores have optimal permeability to allow growth and protection against harmful compounds. The larger pore formed by Omp2a may be advantageous for intracellular growth, when the bacterium is competing with the host cell for nutrients whose concentration is particularly low within the phagosome.</text>
</comment>
<comment type="similarity">
    <text evidence="3">Belongs to the alphaproteobacteria porin family.</text>
</comment>
<name>OMP2A_BRUOV</name>
<dbReference type="EMBL" id="U26442">
    <property type="protein sequence ID" value="AAA67795.1"/>
    <property type="molecule type" value="Genomic_DNA"/>
</dbReference>
<dbReference type="EMBL" id="AY008720">
    <property type="protein sequence ID" value="AAG38244.1"/>
    <property type="molecule type" value="Genomic_DNA"/>
</dbReference>
<dbReference type="EMBL" id="DQ861301">
    <property type="protein sequence ID" value="ABI23034.1"/>
    <property type="molecule type" value="Genomic_DNA"/>
</dbReference>
<dbReference type="SMR" id="Q45331"/>
<dbReference type="GO" id="GO:0009279">
    <property type="term" value="C:cell outer membrane"/>
    <property type="evidence" value="ECO:0007669"/>
    <property type="project" value="UniProtKB-SubCell"/>
</dbReference>
<dbReference type="GO" id="GO:0046930">
    <property type="term" value="C:pore complex"/>
    <property type="evidence" value="ECO:0007669"/>
    <property type="project" value="UniProtKB-KW"/>
</dbReference>
<dbReference type="GO" id="GO:0015288">
    <property type="term" value="F:porin activity"/>
    <property type="evidence" value="ECO:0007669"/>
    <property type="project" value="UniProtKB-KW"/>
</dbReference>
<dbReference type="GO" id="GO:0006811">
    <property type="term" value="P:monoatomic ion transport"/>
    <property type="evidence" value="ECO:0007669"/>
    <property type="project" value="UniProtKB-KW"/>
</dbReference>
<dbReference type="InterPro" id="IPR003684">
    <property type="entry name" value="Porin_alphabac"/>
</dbReference>
<dbReference type="Pfam" id="PF02530">
    <property type="entry name" value="Porin_2"/>
    <property type="match status" value="1"/>
</dbReference>
<dbReference type="SUPFAM" id="SSF56935">
    <property type="entry name" value="Porins"/>
    <property type="match status" value="1"/>
</dbReference>
<sequence length="346" mass="37070">MNIKSLLLGSAAALVAASGAQAADAIVAPEPEAVEYVRVCDAYGAGYFYIPGTETCLRISGYVRYDVKGGDDVYTGSDRKGWDKGARFALMFNTNSETELGTLGTYTQLRFNYTSNNSRHDGQYGDFSDDRDVADGSVSTGTDLQFAYITLGGFKVGIDESEFHTFTGYLGDIINDDVISAGSYRTGKIAYTFTGGNGFSAVIALEQGGEDVDNDYTIDGYMPHVVGGLKYAGGWGSIAGVVAYDSVIEEWATKVRGDVNITDRFSVWLQGAYSSAATPNQNYGQWGGDWAVWGGAKFIATEKATFNLQAAHDDWGKTAVTANVAYQLVPGFTITPEVSYTKFGGE</sequence>
<feature type="signal peptide" evidence="2">
    <location>
        <begin position="1"/>
        <end position="22"/>
    </location>
</feature>
<feature type="chain" id="PRO_0000354018" description="Porin Omp2a">
    <location>
        <begin position="23"/>
        <end position="346"/>
    </location>
</feature>
<organism>
    <name type="scientific">Brucella ovis</name>
    <dbReference type="NCBI Taxonomy" id="236"/>
    <lineage>
        <taxon>Bacteria</taxon>
        <taxon>Pseudomonadati</taxon>
        <taxon>Pseudomonadota</taxon>
        <taxon>Alphaproteobacteria</taxon>
        <taxon>Hyphomicrobiales</taxon>
        <taxon>Brucellaceae</taxon>
        <taxon>Brucella/Ochrobactrum group</taxon>
        <taxon>Brucella</taxon>
    </lineage>
</organism>
<protein>
    <recommendedName>
        <fullName>Porin Omp2a</fullName>
    </recommendedName>
</protein>
<reference key="1">
    <citation type="journal article" date="1996" name="Int. J. Syst. Bacteriol.">
        <title>Species-specific sequences at the omp2 locus of Brucella type strains.</title>
        <authorList>
            <person name="Ficht T.A."/>
            <person name="Husseinen H.S."/>
            <person name="Derr J."/>
            <person name="Bearden S.W."/>
        </authorList>
    </citation>
    <scope>NUCLEOTIDE SEQUENCE [GENOMIC DNA]</scope>
</reference>
<reference key="2">
    <citation type="journal article" date="2001" name="J. Bacteriol.">
        <title>Molecular, antigenic, and functional analyses of Omp2b porin size variants of Brucella spp.</title>
        <authorList>
            <person name="Paquet J.-Y."/>
            <person name="Diaz M.A."/>
            <person name="Genevrois S."/>
            <person name="Grayon M."/>
            <person name="Verger J.-M."/>
            <person name="de Bolle X."/>
            <person name="Lakey J.H."/>
            <person name="Letesson J.-J."/>
            <person name="Cloeckaert A."/>
        </authorList>
    </citation>
    <scope>NUCLEOTIDE SEQUENCE [GENOMIC DNA]</scope>
    <source>
        <strain>76-250</strain>
    </source>
</reference>
<reference key="3">
    <citation type="submission" date="2006-07" db="EMBL/GenBank/DDBJ databases">
        <title>A new Brucella: Xinjiang Brucella ovis 019.</title>
        <authorList>
            <person name="Wang Y."/>
            <person name="Chen C."/>
            <person name="Liu J."/>
        </authorList>
    </citation>
    <scope>NUCLEOTIDE SEQUENCE [GENOMIC DNA]</scope>
    <source>
        <strain>019</strain>
    </source>
</reference>